<evidence type="ECO:0000255" key="1">
    <source>
        <dbReference type="HAMAP-Rule" id="MF_00275"/>
    </source>
</evidence>
<gene>
    <name evidence="1" type="primary">kdpA</name>
    <name type="ordered locus">MCA2217</name>
</gene>
<comment type="function">
    <text evidence="1">Part of the high-affinity ATP-driven potassium transport (or Kdp) system, which catalyzes the hydrolysis of ATP coupled with the electrogenic transport of potassium into the cytoplasm. This subunit binds the periplasmic potassium ions and delivers the ions to the membrane domain of KdpB through an intramembrane tunnel.</text>
</comment>
<comment type="subunit">
    <text evidence="1">The system is composed of three essential subunits: KdpA, KdpB and KdpC.</text>
</comment>
<comment type="subcellular location">
    <subcellularLocation>
        <location evidence="1">Cell inner membrane</location>
        <topology evidence="1">Multi-pass membrane protein</topology>
    </subcellularLocation>
</comment>
<comment type="similarity">
    <text evidence="1">Belongs to the KdpA family.</text>
</comment>
<dbReference type="EMBL" id="AE017282">
    <property type="protein sequence ID" value="AAU91816.1"/>
    <property type="molecule type" value="Genomic_DNA"/>
</dbReference>
<dbReference type="RefSeq" id="WP_010961449.1">
    <property type="nucleotide sequence ID" value="NC_002977.6"/>
</dbReference>
<dbReference type="SMR" id="Q605R1"/>
<dbReference type="STRING" id="243233.MCA2217"/>
<dbReference type="GeneID" id="88224429"/>
<dbReference type="KEGG" id="mca:MCA2217"/>
<dbReference type="eggNOG" id="COG2060">
    <property type="taxonomic scope" value="Bacteria"/>
</dbReference>
<dbReference type="HOGENOM" id="CLU_018614_3_0_6"/>
<dbReference type="Proteomes" id="UP000006821">
    <property type="component" value="Chromosome"/>
</dbReference>
<dbReference type="GO" id="GO:0005886">
    <property type="term" value="C:plasma membrane"/>
    <property type="evidence" value="ECO:0007669"/>
    <property type="project" value="UniProtKB-SubCell"/>
</dbReference>
<dbReference type="GO" id="GO:0008556">
    <property type="term" value="F:P-type potassium transmembrane transporter activity"/>
    <property type="evidence" value="ECO:0007669"/>
    <property type="project" value="InterPro"/>
</dbReference>
<dbReference type="GO" id="GO:0030955">
    <property type="term" value="F:potassium ion binding"/>
    <property type="evidence" value="ECO:0007669"/>
    <property type="project" value="UniProtKB-UniRule"/>
</dbReference>
<dbReference type="HAMAP" id="MF_00275">
    <property type="entry name" value="KdpA"/>
    <property type="match status" value="1"/>
</dbReference>
<dbReference type="InterPro" id="IPR004623">
    <property type="entry name" value="KdpA"/>
</dbReference>
<dbReference type="NCBIfam" id="TIGR00680">
    <property type="entry name" value="kdpA"/>
    <property type="match status" value="1"/>
</dbReference>
<dbReference type="PANTHER" id="PTHR30607">
    <property type="entry name" value="POTASSIUM-TRANSPORTING ATPASE A CHAIN"/>
    <property type="match status" value="1"/>
</dbReference>
<dbReference type="PANTHER" id="PTHR30607:SF2">
    <property type="entry name" value="POTASSIUM-TRANSPORTING ATPASE POTASSIUM-BINDING SUBUNIT"/>
    <property type="match status" value="1"/>
</dbReference>
<dbReference type="Pfam" id="PF03814">
    <property type="entry name" value="KdpA"/>
    <property type="match status" value="1"/>
</dbReference>
<dbReference type="PIRSF" id="PIRSF001294">
    <property type="entry name" value="K_ATPaseA"/>
    <property type="match status" value="1"/>
</dbReference>
<proteinExistence type="inferred from homology"/>
<accession>Q605R1</accession>
<organism>
    <name type="scientific">Methylococcus capsulatus (strain ATCC 33009 / NCIMB 11132 / Bath)</name>
    <dbReference type="NCBI Taxonomy" id="243233"/>
    <lineage>
        <taxon>Bacteria</taxon>
        <taxon>Pseudomonadati</taxon>
        <taxon>Pseudomonadota</taxon>
        <taxon>Gammaproteobacteria</taxon>
        <taxon>Methylococcales</taxon>
        <taxon>Methylococcaceae</taxon>
        <taxon>Methylococcus</taxon>
    </lineage>
</organism>
<sequence>MTANGLLQICGYLGVLLALAKPLGSYMAAVYEGRSATVRVLASVERFIYRITGIDPEAEMRWTGYASAFLVFNLLGVLAVYALQRCQGFLPLNPQGLPAVAPDSAFNTAISFATNTNWQGYGGEMTLSHLTQMLGLTVQNFVSAASGMAVLVALIRGFVRRNADTLGNFWVDLTRSILHILLPLSFLLALLLIGQGVVQTFEPYRNVTLVEATGYDRPKQDEGGHPLVDADGNPVTEHVTVSEQTLALGPAASQVAIKQLGTNGGGFFSVNSAHPFENPTPFSNFLEMLAILVISGALCHTFGVMVGDTRQGWVILAAMTLIFVPLLFVTVLCEQGGNPAFAALGVDPAGGNMEGKETRFGIVNSALWATATTAASNGSVNAMHDSFTPLGGLVPMWLMQLGEVVFGGVGSGLYGMLVFAIVAVFVAGLMIGRTPEYLGKKIEAYEMKMAAIVILVPPLMVLGGTAVAVMLDAGKSSVFNPGAHGFSEILYAFSSAGNNNGSAFAGLAANTPFYNLMLGLAMWFSRYWLAVPVLAIAGALAAKNYVPPGAGTLPTHTPMFVGLLVGVVIIVGALTFIPALALGPIVEHLMMIGAR</sequence>
<protein>
    <recommendedName>
        <fullName evidence="1">Potassium-transporting ATPase potassium-binding subunit</fullName>
    </recommendedName>
    <alternativeName>
        <fullName evidence="1">ATP phosphohydrolase [potassium-transporting] A chain</fullName>
    </alternativeName>
    <alternativeName>
        <fullName evidence="1">Potassium-binding and translocating subunit A</fullName>
    </alternativeName>
    <alternativeName>
        <fullName evidence="1">Potassium-translocating ATPase A chain</fullName>
    </alternativeName>
</protein>
<name>KDPA_METCA</name>
<keyword id="KW-0997">Cell inner membrane</keyword>
<keyword id="KW-1003">Cell membrane</keyword>
<keyword id="KW-0406">Ion transport</keyword>
<keyword id="KW-0472">Membrane</keyword>
<keyword id="KW-0630">Potassium</keyword>
<keyword id="KW-0633">Potassium transport</keyword>
<keyword id="KW-1185">Reference proteome</keyword>
<keyword id="KW-0812">Transmembrane</keyword>
<keyword id="KW-1133">Transmembrane helix</keyword>
<keyword id="KW-0813">Transport</keyword>
<feature type="chain" id="PRO_0000166506" description="Potassium-transporting ATPase potassium-binding subunit">
    <location>
        <begin position="1"/>
        <end position="595"/>
    </location>
</feature>
<feature type="transmembrane region" description="Helical" evidence="1">
    <location>
        <begin position="9"/>
        <end position="29"/>
    </location>
</feature>
<feature type="transmembrane region" description="Helical" evidence="1">
    <location>
        <begin position="63"/>
        <end position="83"/>
    </location>
</feature>
<feature type="transmembrane region" description="Helical" evidence="1">
    <location>
        <begin position="135"/>
        <end position="155"/>
    </location>
</feature>
<feature type="transmembrane region" description="Helical" evidence="1">
    <location>
        <begin position="177"/>
        <end position="197"/>
    </location>
</feature>
<feature type="transmembrane region" description="Helical" evidence="1">
    <location>
        <begin position="285"/>
        <end position="305"/>
    </location>
</feature>
<feature type="transmembrane region" description="Helical" evidence="1">
    <location>
        <begin position="312"/>
        <end position="332"/>
    </location>
</feature>
<feature type="transmembrane region" description="Helical" evidence="1">
    <location>
        <begin position="412"/>
        <end position="432"/>
    </location>
</feature>
<feature type="transmembrane region" description="Helical" evidence="1">
    <location>
        <begin position="451"/>
        <end position="471"/>
    </location>
</feature>
<feature type="transmembrane region" description="Helical" evidence="1">
    <location>
        <begin position="516"/>
        <end position="536"/>
    </location>
</feature>
<feature type="transmembrane region" description="Helical" evidence="1">
    <location>
        <begin position="560"/>
        <end position="580"/>
    </location>
</feature>
<reference key="1">
    <citation type="journal article" date="2004" name="PLoS Biol.">
        <title>Genomic insights into methanotrophy: the complete genome sequence of Methylococcus capsulatus (Bath).</title>
        <authorList>
            <person name="Ward N.L."/>
            <person name="Larsen O."/>
            <person name="Sakwa J."/>
            <person name="Bruseth L."/>
            <person name="Khouri H.M."/>
            <person name="Durkin A.S."/>
            <person name="Dimitrov G."/>
            <person name="Jiang L."/>
            <person name="Scanlan D."/>
            <person name="Kang K.H."/>
            <person name="Lewis M.R."/>
            <person name="Nelson K.E."/>
            <person name="Methe B.A."/>
            <person name="Wu M."/>
            <person name="Heidelberg J.F."/>
            <person name="Paulsen I.T."/>
            <person name="Fouts D.E."/>
            <person name="Ravel J."/>
            <person name="Tettelin H."/>
            <person name="Ren Q."/>
            <person name="Read T.D."/>
            <person name="DeBoy R.T."/>
            <person name="Seshadri R."/>
            <person name="Salzberg S.L."/>
            <person name="Jensen H.B."/>
            <person name="Birkeland N.K."/>
            <person name="Nelson W.C."/>
            <person name="Dodson R.J."/>
            <person name="Grindhaug S.H."/>
            <person name="Holt I.E."/>
            <person name="Eidhammer I."/>
            <person name="Jonasen I."/>
            <person name="Vanaken S."/>
            <person name="Utterback T.R."/>
            <person name="Feldblyum T.V."/>
            <person name="Fraser C.M."/>
            <person name="Lillehaug J.R."/>
            <person name="Eisen J.A."/>
        </authorList>
    </citation>
    <scope>NUCLEOTIDE SEQUENCE [LARGE SCALE GENOMIC DNA]</scope>
    <source>
        <strain>ATCC 33009 / NCIMB 11132 / Bath</strain>
    </source>
</reference>